<reference key="1">
    <citation type="journal article" date="2004" name="Proc. Natl. Acad. Sci. U.S.A.">
        <title>Structural flexibility in the Burkholderia mallei genome.</title>
        <authorList>
            <person name="Nierman W.C."/>
            <person name="DeShazer D."/>
            <person name="Kim H.S."/>
            <person name="Tettelin H."/>
            <person name="Nelson K.E."/>
            <person name="Feldblyum T.V."/>
            <person name="Ulrich R.L."/>
            <person name="Ronning C.M."/>
            <person name="Brinkac L.M."/>
            <person name="Daugherty S.C."/>
            <person name="Davidsen T.D."/>
            <person name="DeBoy R.T."/>
            <person name="Dimitrov G."/>
            <person name="Dodson R.J."/>
            <person name="Durkin A.S."/>
            <person name="Gwinn M.L."/>
            <person name="Haft D.H."/>
            <person name="Khouri H.M."/>
            <person name="Kolonay J.F."/>
            <person name="Madupu R."/>
            <person name="Mohammoud Y."/>
            <person name="Nelson W.C."/>
            <person name="Radune D."/>
            <person name="Romero C.M."/>
            <person name="Sarria S."/>
            <person name="Selengut J."/>
            <person name="Shamblin C."/>
            <person name="Sullivan S.A."/>
            <person name="White O."/>
            <person name="Yu Y."/>
            <person name="Zafar N."/>
            <person name="Zhou L."/>
            <person name="Fraser C.M."/>
        </authorList>
    </citation>
    <scope>NUCLEOTIDE SEQUENCE [LARGE SCALE GENOMIC DNA]</scope>
    <source>
        <strain>ATCC 23344</strain>
    </source>
</reference>
<evidence type="ECO:0000250" key="1"/>
<evidence type="ECO:0000255" key="2"/>
<evidence type="ECO:0000256" key="3">
    <source>
        <dbReference type="SAM" id="MobiDB-lite"/>
    </source>
</evidence>
<evidence type="ECO:0000305" key="4"/>
<feature type="chain" id="PRO_0000344014" description="Secretion apparatus protein BsaZ">
    <location>
        <begin position="1"/>
        <end position="411"/>
    </location>
</feature>
<feature type="transmembrane region" description="Helical" evidence="2">
    <location>
        <begin position="28"/>
        <end position="48"/>
    </location>
</feature>
<feature type="transmembrane region" description="Helical" evidence="2">
    <location>
        <begin position="80"/>
        <end position="100"/>
    </location>
</feature>
<feature type="transmembrane region" description="Helical" evidence="2">
    <location>
        <begin position="137"/>
        <end position="157"/>
    </location>
</feature>
<feature type="transmembrane region" description="Helical" evidence="2">
    <location>
        <begin position="175"/>
        <end position="195"/>
    </location>
</feature>
<feature type="region of interest" description="Disordered" evidence="3">
    <location>
        <begin position="341"/>
        <end position="411"/>
    </location>
</feature>
<feature type="compositionally biased region" description="Low complexity" evidence="3">
    <location>
        <begin position="370"/>
        <end position="404"/>
    </location>
</feature>
<accession>Q62B05</accession>
<organism>
    <name type="scientific">Burkholderia mallei (strain ATCC 23344)</name>
    <dbReference type="NCBI Taxonomy" id="243160"/>
    <lineage>
        <taxon>Bacteria</taxon>
        <taxon>Pseudomonadati</taxon>
        <taxon>Pseudomonadota</taxon>
        <taxon>Betaproteobacteria</taxon>
        <taxon>Burkholderiales</taxon>
        <taxon>Burkholderiaceae</taxon>
        <taxon>Burkholderia</taxon>
        <taxon>pseudomallei group</taxon>
    </lineage>
</organism>
<comment type="function">
    <text evidence="1">Part of the bsa type III secretion system, is involved in the intracellular replication of invading bacteria inside the host cell. Probably necessary for the lysis of the vacuole membrane and escape into the host cell cytoplasm (By similarity).</text>
</comment>
<comment type="subcellular location">
    <subcellularLocation>
        <location evidence="4">Cell membrane</location>
        <topology evidence="4">Multi-pass membrane protein</topology>
    </subcellularLocation>
</comment>
<comment type="similarity">
    <text evidence="4">Belongs to the type III secretion exporter family.</text>
</comment>
<proteinExistence type="inferred from homology"/>
<gene>
    <name type="primary">bsaZ</name>
    <name type="ordered locus">BMAA1533</name>
</gene>
<protein>
    <recommendedName>
        <fullName>Secretion apparatus protein BsaZ</fullName>
    </recommendedName>
</protein>
<keyword id="KW-1003">Cell membrane</keyword>
<keyword id="KW-0472">Membrane</keyword>
<keyword id="KW-1185">Reference proteome</keyword>
<keyword id="KW-0812">Transmembrane</keyword>
<keyword id="KW-1133">Transmembrane helix</keyword>
<keyword id="KW-0843">Virulence</keyword>
<dbReference type="EMBL" id="CP000011">
    <property type="protein sequence ID" value="AAU46005.1"/>
    <property type="molecule type" value="Genomic_DNA"/>
</dbReference>
<dbReference type="RefSeq" id="WP_004188512.1">
    <property type="nucleotide sequence ID" value="NC_006349.2"/>
</dbReference>
<dbReference type="RefSeq" id="YP_106123.1">
    <property type="nucleotide sequence ID" value="NC_006349.2"/>
</dbReference>
<dbReference type="SMR" id="Q62B05"/>
<dbReference type="MEROPS" id="N06.002"/>
<dbReference type="GeneID" id="92975827"/>
<dbReference type="KEGG" id="bma:BMAA1533"/>
<dbReference type="PATRIC" id="fig|243160.12.peg.5109"/>
<dbReference type="eggNOG" id="COG1377">
    <property type="taxonomic scope" value="Bacteria"/>
</dbReference>
<dbReference type="HOGENOM" id="CLU_041013_1_3_4"/>
<dbReference type="Proteomes" id="UP000006693">
    <property type="component" value="Chromosome 2"/>
</dbReference>
<dbReference type="GO" id="GO:0005886">
    <property type="term" value="C:plasma membrane"/>
    <property type="evidence" value="ECO:0007669"/>
    <property type="project" value="UniProtKB-SubCell"/>
</dbReference>
<dbReference type="GO" id="GO:0009306">
    <property type="term" value="P:protein secretion"/>
    <property type="evidence" value="ECO:0007669"/>
    <property type="project" value="InterPro"/>
</dbReference>
<dbReference type="Gene3D" id="6.10.250.2080">
    <property type="match status" value="1"/>
</dbReference>
<dbReference type="Gene3D" id="3.40.1690.10">
    <property type="entry name" value="secretion proteins EscU"/>
    <property type="match status" value="1"/>
</dbReference>
<dbReference type="InterPro" id="IPR006307">
    <property type="entry name" value="BsaZ-like"/>
</dbReference>
<dbReference type="InterPro" id="IPR006135">
    <property type="entry name" value="T3SS_substrate_exporter"/>
</dbReference>
<dbReference type="InterPro" id="IPR029025">
    <property type="entry name" value="T3SS_substrate_exporter_C"/>
</dbReference>
<dbReference type="NCBIfam" id="TIGR01404">
    <property type="entry name" value="FlhB_rel_III"/>
    <property type="match status" value="1"/>
</dbReference>
<dbReference type="NCBIfam" id="NF006017">
    <property type="entry name" value="PRK08156.1"/>
    <property type="match status" value="1"/>
</dbReference>
<dbReference type="PANTHER" id="PTHR30531">
    <property type="entry name" value="FLAGELLAR BIOSYNTHETIC PROTEIN FLHB"/>
    <property type="match status" value="1"/>
</dbReference>
<dbReference type="PANTHER" id="PTHR30531:SF14">
    <property type="entry name" value="SURFACE PRESENTATION OF ANTIGENS PROTEIN SPAS"/>
    <property type="match status" value="1"/>
</dbReference>
<dbReference type="Pfam" id="PF01312">
    <property type="entry name" value="Bac_export_2"/>
    <property type="match status" value="1"/>
</dbReference>
<dbReference type="PRINTS" id="PR00950">
    <property type="entry name" value="TYPE3IMSPROT"/>
</dbReference>
<dbReference type="SUPFAM" id="SSF160544">
    <property type="entry name" value="EscU C-terminal domain-like"/>
    <property type="match status" value="1"/>
</dbReference>
<name>BSAZ_BURMA</name>
<sequence>MAEKTEKPTAKKLRDAAKKGQTFKARDIVALIVIATGALAAPALVDLTRIAAEFVRIASTGAQSNPGAYAFAWAKLFLRIAAPFVLLCAAAGALPSLVQSRFTLAVESIRFDLTALDPVKGMKRLFSWRSAKDAVKALLYVGVFALTVRVFADLYHADVFGLFRARPALLGHMWIVLTVRLVLLFLLCALPVLILDAAVEYFLYHRELKMDKHEVKQEYKESEGNHEIKSKRREIHQELLSEEIKANVEQSDFIVANPTHIAIGVYVNPDIVPIPFVSVRETNARALAVIRHAEACGVPVVRNVALARSIYRNSPRRYSFVSHDDIDGVMRVLIWLGEVEAANRGGPPPETRAPTSAEPQARDGVAPLGDACADNAFPDDAPPGAAAPNAGSPDSPAPDGGAPARTGDQNA</sequence>